<feature type="chain" id="PRO_0000114138" description="Chromosomal replication initiator protein DnaA">
    <location>
        <begin position="1"/>
        <end position="500"/>
    </location>
</feature>
<feature type="region of interest" description="Domain I, interacts with DnaA modulators" evidence="1">
    <location>
        <begin position="1"/>
        <end position="81"/>
    </location>
</feature>
<feature type="region of interest" description="Domain II" evidence="1">
    <location>
        <begin position="81"/>
        <end position="155"/>
    </location>
</feature>
<feature type="region of interest" description="Domain III, AAA+ region" evidence="1">
    <location>
        <begin position="156"/>
        <end position="377"/>
    </location>
</feature>
<feature type="region of interest" description="Domain IV, binds dsDNA" evidence="1">
    <location>
        <begin position="378"/>
        <end position="500"/>
    </location>
</feature>
<feature type="binding site" evidence="1">
    <location>
        <position position="200"/>
    </location>
    <ligand>
        <name>ATP</name>
        <dbReference type="ChEBI" id="CHEBI:30616"/>
    </ligand>
</feature>
<feature type="binding site" evidence="1">
    <location>
        <position position="202"/>
    </location>
    <ligand>
        <name>ATP</name>
        <dbReference type="ChEBI" id="CHEBI:30616"/>
    </ligand>
</feature>
<feature type="binding site" evidence="1">
    <location>
        <position position="203"/>
    </location>
    <ligand>
        <name>ATP</name>
        <dbReference type="ChEBI" id="CHEBI:30616"/>
    </ligand>
</feature>
<feature type="binding site" evidence="1">
    <location>
        <position position="204"/>
    </location>
    <ligand>
        <name>ATP</name>
        <dbReference type="ChEBI" id="CHEBI:30616"/>
    </ligand>
</feature>
<protein>
    <recommendedName>
        <fullName evidence="1">Chromosomal replication initiator protein DnaA</fullName>
    </recommendedName>
</protein>
<name>DNAA_BIFLO</name>
<comment type="function">
    <text evidence="1">Plays an essential role in the initiation and regulation of chromosomal replication. ATP-DnaA binds to the origin of replication (oriC) to initiate formation of the DNA replication initiation complex once per cell cycle. Binds the DnaA box (a 9 base pair repeat at the origin) and separates the double-stranded (ds)DNA. Forms a right-handed helical filament on oriC DNA; dsDNA binds to the exterior of the filament while single-stranded (ss)DNA is stabiized in the filament's interior. The ATP-DnaA-oriC complex binds and stabilizes one strand of the AT-rich DNA unwinding element (DUE), permitting loading of DNA polymerase. After initiation quickly degrades to an ADP-DnaA complex that is not apt for DNA replication. Binds acidic phospholipids.</text>
</comment>
<comment type="subunit">
    <text evidence="1">Oligomerizes as a right-handed, spiral filament on DNA at oriC.</text>
</comment>
<comment type="subcellular location">
    <subcellularLocation>
        <location evidence="1">Cytoplasm</location>
    </subcellularLocation>
</comment>
<comment type="domain">
    <text evidence="1">Domain I is involved in oligomerization and binding regulators, domain II is flexibile and of varying length in different bacteria, domain III forms the AAA+ region, while domain IV binds dsDNA.</text>
</comment>
<comment type="similarity">
    <text evidence="1">Belongs to the DnaA family.</text>
</comment>
<evidence type="ECO:0000255" key="1">
    <source>
        <dbReference type="HAMAP-Rule" id="MF_00377"/>
    </source>
</evidence>
<sequence length="500" mass="55309">MVNASGDPVIEAAHIWSDTLTVLKHSASLSPREKGWLEGVVPEGVFGSTIVLCVDNNDTLQAIQGDLNDSLLQALRTVTGENMFPAFKVVPKTEPEPLSEAKPAQPYPSEISPTVAEFGKESYGAKPAAAPREPMPATEPQFPVGQQKMNRDPETHLNKNFTFDSFVPGDSNRFARTVALAVAEGSGQDFNPLCIYGGSGLGKTHLLNAIGNYALVKDPGLKVRYVTSEEFTNEFIDALQNPNQSQGQIAEFNRRYRQVDVLLIDDIQFLGGKEATLDQFFHTFNALHQANKRIVIASDVAPKNLKGFEARLISRFESGLTVDVKPPDLETRIAILRMIASMNGSKIPSDVLDLIAERFTENIRELEGALTRVTAVASLSNQPVTRALAEQTLQDFFTTDVEIKPTDIISQVAKYFHLTFEDLVGKSRTKNVAVPRQIAMYLAREMTSMSLMDIGQVFGGRDHTTVMHACTRISDRMQQKQEIYNYVMELTVRLKQSNTN</sequence>
<dbReference type="EMBL" id="AE014295">
    <property type="protein sequence ID" value="AAN24462.1"/>
    <property type="molecule type" value="Genomic_DNA"/>
</dbReference>
<dbReference type="RefSeq" id="NP_695826.1">
    <property type="nucleotide sequence ID" value="NC_004307.2"/>
</dbReference>
<dbReference type="RefSeq" id="WP_007051767.1">
    <property type="nucleotide sequence ID" value="NC_004307.2"/>
</dbReference>
<dbReference type="SMR" id="Q8G6K0"/>
<dbReference type="STRING" id="206672.BL0640"/>
<dbReference type="EnsemblBacteria" id="AAN24462">
    <property type="protein sequence ID" value="AAN24462"/>
    <property type="gene ID" value="BL0640"/>
</dbReference>
<dbReference type="GeneID" id="69577253"/>
<dbReference type="KEGG" id="blo:BL0640"/>
<dbReference type="PATRIC" id="fig|206672.9.peg.1371"/>
<dbReference type="HOGENOM" id="CLU_026910_2_2_11"/>
<dbReference type="OrthoDB" id="9807019at2"/>
<dbReference type="PhylomeDB" id="Q8G6K0"/>
<dbReference type="Proteomes" id="UP000000439">
    <property type="component" value="Chromosome"/>
</dbReference>
<dbReference type="GO" id="GO:0005737">
    <property type="term" value="C:cytoplasm"/>
    <property type="evidence" value="ECO:0007669"/>
    <property type="project" value="UniProtKB-SubCell"/>
</dbReference>
<dbReference type="GO" id="GO:0005886">
    <property type="term" value="C:plasma membrane"/>
    <property type="evidence" value="ECO:0007669"/>
    <property type="project" value="TreeGrafter"/>
</dbReference>
<dbReference type="GO" id="GO:0005524">
    <property type="term" value="F:ATP binding"/>
    <property type="evidence" value="ECO:0007669"/>
    <property type="project" value="UniProtKB-UniRule"/>
</dbReference>
<dbReference type="GO" id="GO:0016887">
    <property type="term" value="F:ATP hydrolysis activity"/>
    <property type="evidence" value="ECO:0007669"/>
    <property type="project" value="InterPro"/>
</dbReference>
<dbReference type="GO" id="GO:0003688">
    <property type="term" value="F:DNA replication origin binding"/>
    <property type="evidence" value="ECO:0007669"/>
    <property type="project" value="UniProtKB-UniRule"/>
</dbReference>
<dbReference type="GO" id="GO:0008289">
    <property type="term" value="F:lipid binding"/>
    <property type="evidence" value="ECO:0007669"/>
    <property type="project" value="UniProtKB-KW"/>
</dbReference>
<dbReference type="GO" id="GO:0006270">
    <property type="term" value="P:DNA replication initiation"/>
    <property type="evidence" value="ECO:0007669"/>
    <property type="project" value="UniProtKB-UniRule"/>
</dbReference>
<dbReference type="GO" id="GO:0006275">
    <property type="term" value="P:regulation of DNA replication"/>
    <property type="evidence" value="ECO:0007669"/>
    <property type="project" value="UniProtKB-UniRule"/>
</dbReference>
<dbReference type="CDD" id="cd00009">
    <property type="entry name" value="AAA"/>
    <property type="match status" value="1"/>
</dbReference>
<dbReference type="CDD" id="cd06571">
    <property type="entry name" value="Bac_DnaA_C"/>
    <property type="match status" value="1"/>
</dbReference>
<dbReference type="FunFam" id="3.40.50.300:FF:000668">
    <property type="entry name" value="Chromosomal replication initiator protein DnaA"/>
    <property type="match status" value="1"/>
</dbReference>
<dbReference type="Gene3D" id="1.10.1750.10">
    <property type="match status" value="1"/>
</dbReference>
<dbReference type="Gene3D" id="1.10.8.60">
    <property type="match status" value="1"/>
</dbReference>
<dbReference type="Gene3D" id="3.40.50.300">
    <property type="entry name" value="P-loop containing nucleotide triphosphate hydrolases"/>
    <property type="match status" value="1"/>
</dbReference>
<dbReference type="HAMAP" id="MF_00377">
    <property type="entry name" value="DnaA_bact"/>
    <property type="match status" value="1"/>
</dbReference>
<dbReference type="InterPro" id="IPR003593">
    <property type="entry name" value="AAA+_ATPase"/>
</dbReference>
<dbReference type="InterPro" id="IPR001957">
    <property type="entry name" value="Chromosome_initiator_DnaA"/>
</dbReference>
<dbReference type="InterPro" id="IPR020591">
    <property type="entry name" value="Chromosome_initiator_DnaA-like"/>
</dbReference>
<dbReference type="InterPro" id="IPR018312">
    <property type="entry name" value="Chromosome_initiator_DnaA_CS"/>
</dbReference>
<dbReference type="InterPro" id="IPR013159">
    <property type="entry name" value="DnaA_C"/>
</dbReference>
<dbReference type="InterPro" id="IPR013317">
    <property type="entry name" value="DnaA_dom"/>
</dbReference>
<dbReference type="InterPro" id="IPR027417">
    <property type="entry name" value="P-loop_NTPase"/>
</dbReference>
<dbReference type="InterPro" id="IPR010921">
    <property type="entry name" value="Trp_repressor/repl_initiator"/>
</dbReference>
<dbReference type="NCBIfam" id="TIGR00362">
    <property type="entry name" value="DnaA"/>
    <property type="match status" value="1"/>
</dbReference>
<dbReference type="PANTHER" id="PTHR30050">
    <property type="entry name" value="CHROMOSOMAL REPLICATION INITIATOR PROTEIN DNAA"/>
    <property type="match status" value="1"/>
</dbReference>
<dbReference type="PANTHER" id="PTHR30050:SF2">
    <property type="entry name" value="CHROMOSOMAL REPLICATION INITIATOR PROTEIN DNAA"/>
    <property type="match status" value="1"/>
</dbReference>
<dbReference type="Pfam" id="PF00308">
    <property type="entry name" value="Bac_DnaA"/>
    <property type="match status" value="1"/>
</dbReference>
<dbReference type="Pfam" id="PF08299">
    <property type="entry name" value="Bac_DnaA_C"/>
    <property type="match status" value="1"/>
</dbReference>
<dbReference type="PRINTS" id="PR00051">
    <property type="entry name" value="DNAA"/>
</dbReference>
<dbReference type="SMART" id="SM00382">
    <property type="entry name" value="AAA"/>
    <property type="match status" value="1"/>
</dbReference>
<dbReference type="SMART" id="SM00760">
    <property type="entry name" value="Bac_DnaA_C"/>
    <property type="match status" value="1"/>
</dbReference>
<dbReference type="SUPFAM" id="SSF52540">
    <property type="entry name" value="P-loop containing nucleoside triphosphate hydrolases"/>
    <property type="match status" value="1"/>
</dbReference>
<dbReference type="SUPFAM" id="SSF48295">
    <property type="entry name" value="TrpR-like"/>
    <property type="match status" value="1"/>
</dbReference>
<dbReference type="PROSITE" id="PS01008">
    <property type="entry name" value="DNAA"/>
    <property type="match status" value="1"/>
</dbReference>
<accession>Q8G6K0</accession>
<proteinExistence type="inferred from homology"/>
<reference key="1">
    <citation type="journal article" date="2002" name="Proc. Natl. Acad. Sci. U.S.A.">
        <title>The genome sequence of Bifidobacterium longum reflects its adaptation to the human gastrointestinal tract.</title>
        <authorList>
            <person name="Schell M.A."/>
            <person name="Karmirantzou M."/>
            <person name="Snel B."/>
            <person name="Vilanova D."/>
            <person name="Berger B."/>
            <person name="Pessi G."/>
            <person name="Zwahlen M.-C."/>
            <person name="Desiere F."/>
            <person name="Bork P."/>
            <person name="Delley M."/>
            <person name="Pridmore R.D."/>
            <person name="Arigoni F."/>
        </authorList>
    </citation>
    <scope>NUCLEOTIDE SEQUENCE [LARGE SCALE GENOMIC DNA]</scope>
    <source>
        <strain>NCC 2705</strain>
    </source>
</reference>
<gene>
    <name evidence="1" type="primary">dnaA</name>
    <name type="ordered locus">BL0640</name>
</gene>
<organism>
    <name type="scientific">Bifidobacterium longum (strain NCC 2705)</name>
    <dbReference type="NCBI Taxonomy" id="206672"/>
    <lineage>
        <taxon>Bacteria</taxon>
        <taxon>Bacillati</taxon>
        <taxon>Actinomycetota</taxon>
        <taxon>Actinomycetes</taxon>
        <taxon>Bifidobacteriales</taxon>
        <taxon>Bifidobacteriaceae</taxon>
        <taxon>Bifidobacterium</taxon>
    </lineage>
</organism>
<keyword id="KW-0067">ATP-binding</keyword>
<keyword id="KW-0963">Cytoplasm</keyword>
<keyword id="KW-0235">DNA replication</keyword>
<keyword id="KW-0238">DNA-binding</keyword>
<keyword id="KW-0446">Lipid-binding</keyword>
<keyword id="KW-0547">Nucleotide-binding</keyword>
<keyword id="KW-1185">Reference proteome</keyword>